<name>LEP_BACCL</name>
<proteinExistence type="inferred from homology"/>
<protein>
    <recommendedName>
        <fullName>Signal peptidase I</fullName>
        <shortName>SPase I</shortName>
        <ecNumber>3.4.21.89</ecNumber>
    </recommendedName>
    <alternativeName>
        <fullName>Leader peptidase I</fullName>
    </alternativeName>
</protein>
<feature type="chain" id="PRO_0000109495" description="Signal peptidase I">
    <location>
        <begin position="1"/>
        <end position="182"/>
    </location>
</feature>
<feature type="topological domain" description="Cytoplasmic" evidence="2">
    <location>
        <begin position="1"/>
        <end position="13"/>
    </location>
</feature>
<feature type="transmembrane region" description="Helical" evidence="2">
    <location>
        <begin position="14"/>
        <end position="30"/>
    </location>
</feature>
<feature type="topological domain" description="Extracellular" evidence="2">
    <location>
        <begin position="31"/>
        <end position="182"/>
    </location>
</feature>
<feature type="active site" evidence="1">
    <location>
        <position position="38"/>
    </location>
</feature>
<feature type="active site" evidence="1">
    <location>
        <position position="79"/>
    </location>
</feature>
<reference key="1">
    <citation type="journal article" date="1995" name="Mol. Microbiol.">
        <title>The endogenous Bacillus subtilis (natto) plasmids pTA1015 and pTA1040 contain signal peptidase-encoding genes: identification of a new structural module on cryptic plasmids.</title>
        <authorList>
            <person name="Meijer W.J.J."/>
            <person name="de Jong A."/>
            <person name="Bea G."/>
            <person name="Wisman A."/>
            <person name="Tjalsma H."/>
            <person name="Venema G."/>
            <person name="Bron S."/>
            <person name="van Dijl J.M."/>
        </authorList>
    </citation>
    <scope>NUCLEOTIDE SEQUENCE [GENOMIC DNA]</scope>
</reference>
<dbReference type="EC" id="3.4.21.89"/>
<dbReference type="EMBL" id="Z27457">
    <property type="protein sequence ID" value="CAA81813.1"/>
    <property type="molecule type" value="Genomic_DNA"/>
</dbReference>
<dbReference type="EMBL" id="L26257">
    <property type="protein sequence ID" value="AAA22759.1"/>
    <property type="molecule type" value="Genomic_DNA"/>
</dbReference>
<dbReference type="PIR" id="I40175">
    <property type="entry name" value="I40175"/>
</dbReference>
<dbReference type="RefSeq" id="WP_011230183.1">
    <property type="nucleotide sequence ID" value="NZ_CP025074.1"/>
</dbReference>
<dbReference type="SMR" id="P41027"/>
<dbReference type="GeneID" id="32062626"/>
<dbReference type="GO" id="GO:0005886">
    <property type="term" value="C:plasma membrane"/>
    <property type="evidence" value="ECO:0007669"/>
    <property type="project" value="UniProtKB-SubCell"/>
</dbReference>
<dbReference type="GO" id="GO:0004252">
    <property type="term" value="F:serine-type endopeptidase activity"/>
    <property type="evidence" value="ECO:0007669"/>
    <property type="project" value="UniProtKB-EC"/>
</dbReference>
<dbReference type="GO" id="GO:0006465">
    <property type="term" value="P:signal peptide processing"/>
    <property type="evidence" value="ECO:0007669"/>
    <property type="project" value="InterPro"/>
</dbReference>
<dbReference type="CDD" id="cd06530">
    <property type="entry name" value="S26_SPase_I"/>
    <property type="match status" value="1"/>
</dbReference>
<dbReference type="FunFam" id="2.10.109.10:FF:000008">
    <property type="entry name" value="Signal peptidase I"/>
    <property type="match status" value="1"/>
</dbReference>
<dbReference type="Gene3D" id="2.10.109.10">
    <property type="entry name" value="Umud Fragment, subunit A"/>
    <property type="match status" value="1"/>
</dbReference>
<dbReference type="InterPro" id="IPR036286">
    <property type="entry name" value="LexA/Signal_pep-like_sf"/>
</dbReference>
<dbReference type="InterPro" id="IPR000223">
    <property type="entry name" value="Pept_S26A_signal_pept_1"/>
</dbReference>
<dbReference type="InterPro" id="IPR019758">
    <property type="entry name" value="Pept_S26A_signal_pept_1_CS"/>
</dbReference>
<dbReference type="InterPro" id="IPR019757">
    <property type="entry name" value="Pept_S26A_signal_pept_1_Lys-AS"/>
</dbReference>
<dbReference type="InterPro" id="IPR019756">
    <property type="entry name" value="Pept_S26A_signal_pept_1_Ser-AS"/>
</dbReference>
<dbReference type="InterPro" id="IPR019533">
    <property type="entry name" value="Peptidase_S26"/>
</dbReference>
<dbReference type="NCBIfam" id="TIGR02227">
    <property type="entry name" value="sigpep_I_bact"/>
    <property type="match status" value="1"/>
</dbReference>
<dbReference type="PANTHER" id="PTHR43390:SF1">
    <property type="entry name" value="CHLOROPLAST PROCESSING PEPTIDASE"/>
    <property type="match status" value="1"/>
</dbReference>
<dbReference type="PANTHER" id="PTHR43390">
    <property type="entry name" value="SIGNAL PEPTIDASE I"/>
    <property type="match status" value="1"/>
</dbReference>
<dbReference type="Pfam" id="PF10502">
    <property type="entry name" value="Peptidase_S26"/>
    <property type="match status" value="1"/>
</dbReference>
<dbReference type="PRINTS" id="PR00727">
    <property type="entry name" value="LEADERPTASE"/>
</dbReference>
<dbReference type="SUPFAM" id="SSF51306">
    <property type="entry name" value="LexA/Signal peptidase"/>
    <property type="match status" value="1"/>
</dbReference>
<dbReference type="PROSITE" id="PS00501">
    <property type="entry name" value="SPASE_I_1"/>
    <property type="match status" value="1"/>
</dbReference>
<dbReference type="PROSITE" id="PS00760">
    <property type="entry name" value="SPASE_I_2"/>
    <property type="match status" value="1"/>
</dbReference>
<dbReference type="PROSITE" id="PS00761">
    <property type="entry name" value="SPASE_I_3"/>
    <property type="match status" value="1"/>
</dbReference>
<organism>
    <name type="scientific">Bacillus caldolyticus</name>
    <dbReference type="NCBI Taxonomy" id="1394"/>
    <lineage>
        <taxon>Bacteria</taxon>
        <taxon>Bacillati</taxon>
        <taxon>Bacillota</taxon>
        <taxon>Bacilli</taxon>
        <taxon>Bacillales</taxon>
        <taxon>Anoxybacillaceae</taxon>
        <taxon>Geobacillus</taxon>
        <taxon>Geobacillus thermoleovorans group</taxon>
    </lineage>
</organism>
<evidence type="ECO:0000250" key="1"/>
<evidence type="ECO:0000255" key="2"/>
<evidence type="ECO:0000305" key="3"/>
<sequence length="182" mass="21263">MTKQKEKRGRRWPWFVAVCVVATLRLFVFSNYVVEGKSMMPTLESGNLLIVNKLSYDIGPIRRFDIIVFHANKKEDYVKRVIGLPGDRIAYKNDILYVNGKKVDEPYLRPYKQKLLDGRLTGDFTLEEVTGKTRVPPGCIFVLGDNRLSSWDSRHFGFVKINQIVGKVDFRYWPFKQFAFQF</sequence>
<accession>P41027</accession>
<comment type="catalytic activity">
    <reaction>
        <text>Cleavage of hydrophobic, N-terminal signal or leader sequences from secreted and periplasmic proteins.</text>
        <dbReference type="EC" id="3.4.21.89"/>
    </reaction>
</comment>
<comment type="subcellular location">
    <subcellularLocation>
        <location evidence="3">Cell membrane</location>
        <topology evidence="3">Single-pass type II membrane protein</topology>
    </subcellularLocation>
</comment>
<comment type="similarity">
    <text evidence="3">Belongs to the peptidase S26 family.</text>
</comment>
<gene>
    <name type="primary">lepB</name>
    <name type="synonym">sipC</name>
</gene>
<keyword id="KW-1003">Cell membrane</keyword>
<keyword id="KW-0378">Hydrolase</keyword>
<keyword id="KW-0472">Membrane</keyword>
<keyword id="KW-0645">Protease</keyword>
<keyword id="KW-0812">Transmembrane</keyword>
<keyword id="KW-1133">Transmembrane helix</keyword>